<proteinExistence type="inferred from homology"/>
<comment type="function">
    <text evidence="1">Involved in the regulation of the intracellular balance of NAD and NADP, and is a key enzyme in the biosynthesis of NADP. Catalyzes specifically the phosphorylation on 2'-hydroxyl of the adenosine moiety of NAD to yield NADP.</text>
</comment>
<comment type="catalytic activity">
    <reaction evidence="1">
        <text>NAD(+) + ATP = ADP + NADP(+) + H(+)</text>
        <dbReference type="Rhea" id="RHEA:18629"/>
        <dbReference type="ChEBI" id="CHEBI:15378"/>
        <dbReference type="ChEBI" id="CHEBI:30616"/>
        <dbReference type="ChEBI" id="CHEBI:57540"/>
        <dbReference type="ChEBI" id="CHEBI:58349"/>
        <dbReference type="ChEBI" id="CHEBI:456216"/>
        <dbReference type="EC" id="2.7.1.23"/>
    </reaction>
</comment>
<comment type="cofactor">
    <cofactor evidence="1">
        <name>a divalent metal cation</name>
        <dbReference type="ChEBI" id="CHEBI:60240"/>
    </cofactor>
</comment>
<comment type="subcellular location">
    <subcellularLocation>
        <location evidence="1">Cytoplasm</location>
    </subcellularLocation>
</comment>
<comment type="similarity">
    <text evidence="1">Belongs to the NAD kinase family.</text>
</comment>
<sequence length="265" mass="29828">MKFTIMSKGDQSSDTLASTMKEYLLDFGFIMDEQEPDIVISVGGDGTLLYAFHRYYNRLDETAFVGVHTGHLGFYADWLPTEVEKLVIAIAKTPFQVVEYPLLEVIIRYMNGSKESQYLAMNEATVKSAEGTLVTEVEIRGEYFETFRGDGLCISTPSGSTAYNKALGGAIIHPSIEAIQIAEMASINNRVFRTVGSPLVLPKHHTCVLKPTAGMNLQITVDHLTMVHQDVKSIQYRVANEKVRFVRFRPFPFWKRVRDSFVADK</sequence>
<reference key="1">
    <citation type="journal article" date="2003" name="Nature">
        <title>The genome sequence of Bacillus anthracis Ames and comparison to closely related bacteria.</title>
        <authorList>
            <person name="Read T.D."/>
            <person name="Peterson S.N."/>
            <person name="Tourasse N.J."/>
            <person name="Baillie L.W."/>
            <person name="Paulsen I.T."/>
            <person name="Nelson K.E."/>
            <person name="Tettelin H."/>
            <person name="Fouts D.E."/>
            <person name="Eisen J.A."/>
            <person name="Gill S.R."/>
            <person name="Holtzapple E.K."/>
            <person name="Okstad O.A."/>
            <person name="Helgason E."/>
            <person name="Rilstone J."/>
            <person name="Wu M."/>
            <person name="Kolonay J.F."/>
            <person name="Beanan M.J."/>
            <person name="Dodson R.J."/>
            <person name="Brinkac L.M."/>
            <person name="Gwinn M.L."/>
            <person name="DeBoy R.T."/>
            <person name="Madpu R."/>
            <person name="Daugherty S.C."/>
            <person name="Durkin A.S."/>
            <person name="Haft D.H."/>
            <person name="Nelson W.C."/>
            <person name="Peterson J.D."/>
            <person name="Pop M."/>
            <person name="Khouri H.M."/>
            <person name="Radune D."/>
            <person name="Benton J.L."/>
            <person name="Mahamoud Y."/>
            <person name="Jiang L."/>
            <person name="Hance I.R."/>
            <person name="Weidman J.F."/>
            <person name="Berry K.J."/>
            <person name="Plaut R.D."/>
            <person name="Wolf A.M."/>
            <person name="Watkins K.L."/>
            <person name="Nierman W.C."/>
            <person name="Hazen A."/>
            <person name="Cline R.T."/>
            <person name="Redmond C."/>
            <person name="Thwaite J.E."/>
            <person name="White O."/>
            <person name="Salzberg S.L."/>
            <person name="Thomason B."/>
            <person name="Friedlander A.M."/>
            <person name="Koehler T.M."/>
            <person name="Hanna P.C."/>
            <person name="Kolstoe A.-B."/>
            <person name="Fraser C.M."/>
        </authorList>
    </citation>
    <scope>NUCLEOTIDE SEQUENCE [LARGE SCALE GENOMIC DNA]</scope>
    <source>
        <strain>Ames / isolate Porton</strain>
    </source>
</reference>
<reference key="2">
    <citation type="journal article" date="2009" name="J. Bacteriol.">
        <title>The complete genome sequence of Bacillus anthracis Ames 'Ancestor'.</title>
        <authorList>
            <person name="Ravel J."/>
            <person name="Jiang L."/>
            <person name="Stanley S.T."/>
            <person name="Wilson M.R."/>
            <person name="Decker R.S."/>
            <person name="Read T.D."/>
            <person name="Worsham P."/>
            <person name="Keim P.S."/>
            <person name="Salzberg S.L."/>
            <person name="Fraser-Liggett C.M."/>
            <person name="Rasko D.A."/>
        </authorList>
    </citation>
    <scope>NUCLEOTIDE SEQUENCE [LARGE SCALE GENOMIC DNA]</scope>
    <source>
        <strain>Ames ancestor</strain>
    </source>
</reference>
<reference key="3">
    <citation type="submission" date="2004-01" db="EMBL/GenBank/DDBJ databases">
        <title>Complete genome sequence of Bacillus anthracis Sterne.</title>
        <authorList>
            <person name="Brettin T.S."/>
            <person name="Bruce D."/>
            <person name="Challacombe J.F."/>
            <person name="Gilna P."/>
            <person name="Han C."/>
            <person name="Hill K."/>
            <person name="Hitchcock P."/>
            <person name="Jackson P."/>
            <person name="Keim P."/>
            <person name="Longmire J."/>
            <person name="Lucas S."/>
            <person name="Okinaka R."/>
            <person name="Richardson P."/>
            <person name="Rubin E."/>
            <person name="Tice H."/>
        </authorList>
    </citation>
    <scope>NUCLEOTIDE SEQUENCE [LARGE SCALE GENOMIC DNA]</scope>
    <source>
        <strain>Sterne</strain>
    </source>
</reference>
<gene>
    <name evidence="1" type="primary">nadK1</name>
    <name type="ordered locus">BA_1213</name>
    <name type="ordered locus">GBAA_1213</name>
    <name type="ordered locus">BAS1120</name>
</gene>
<accession>Q81TQ3</accession>
<accession>Q6I1Y8</accession>
<accession>Q6KVS7</accession>
<keyword id="KW-0067">ATP-binding</keyword>
<keyword id="KW-0963">Cytoplasm</keyword>
<keyword id="KW-0418">Kinase</keyword>
<keyword id="KW-0520">NAD</keyword>
<keyword id="KW-0521">NADP</keyword>
<keyword id="KW-0547">Nucleotide-binding</keyword>
<keyword id="KW-1185">Reference proteome</keyword>
<keyword id="KW-0808">Transferase</keyword>
<feature type="chain" id="PRO_0000120591" description="NAD kinase 1">
    <location>
        <begin position="1"/>
        <end position="265"/>
    </location>
</feature>
<feature type="active site" description="Proton acceptor" evidence="1">
    <location>
        <position position="45"/>
    </location>
</feature>
<feature type="binding site" evidence="1">
    <location>
        <begin position="45"/>
        <end position="46"/>
    </location>
    <ligand>
        <name>NAD(+)</name>
        <dbReference type="ChEBI" id="CHEBI:57540"/>
    </ligand>
</feature>
<feature type="binding site" evidence="1">
    <location>
        <begin position="122"/>
        <end position="123"/>
    </location>
    <ligand>
        <name>NAD(+)</name>
        <dbReference type="ChEBI" id="CHEBI:57540"/>
    </ligand>
</feature>
<feature type="binding site" evidence="1">
    <location>
        <position position="148"/>
    </location>
    <ligand>
        <name>NAD(+)</name>
        <dbReference type="ChEBI" id="CHEBI:57540"/>
    </ligand>
</feature>
<feature type="binding site" evidence="1">
    <location>
        <position position="150"/>
    </location>
    <ligand>
        <name>NAD(+)</name>
        <dbReference type="ChEBI" id="CHEBI:57540"/>
    </ligand>
</feature>
<feature type="binding site" evidence="1">
    <location>
        <position position="185"/>
    </location>
    <ligand>
        <name>NAD(+)</name>
        <dbReference type="ChEBI" id="CHEBI:57540"/>
    </ligand>
</feature>
<evidence type="ECO:0000255" key="1">
    <source>
        <dbReference type="HAMAP-Rule" id="MF_00361"/>
    </source>
</evidence>
<name>NADK1_BACAN</name>
<organism>
    <name type="scientific">Bacillus anthracis</name>
    <dbReference type="NCBI Taxonomy" id="1392"/>
    <lineage>
        <taxon>Bacteria</taxon>
        <taxon>Bacillati</taxon>
        <taxon>Bacillota</taxon>
        <taxon>Bacilli</taxon>
        <taxon>Bacillales</taxon>
        <taxon>Bacillaceae</taxon>
        <taxon>Bacillus</taxon>
        <taxon>Bacillus cereus group</taxon>
    </lineage>
</organism>
<dbReference type="EC" id="2.7.1.23" evidence="1"/>
<dbReference type="EMBL" id="AE016879">
    <property type="protein sequence ID" value="AAP25174.1"/>
    <property type="molecule type" value="Genomic_DNA"/>
</dbReference>
<dbReference type="EMBL" id="AE017334">
    <property type="protein sequence ID" value="AAT30299.1"/>
    <property type="molecule type" value="Genomic_DNA"/>
</dbReference>
<dbReference type="EMBL" id="AE017225">
    <property type="protein sequence ID" value="AAT53443.1"/>
    <property type="molecule type" value="Genomic_DNA"/>
</dbReference>
<dbReference type="RefSeq" id="NP_843688.1">
    <property type="nucleotide sequence ID" value="NC_003997.3"/>
</dbReference>
<dbReference type="RefSeq" id="WP_000673194.1">
    <property type="nucleotide sequence ID" value="NZ_WXXJ01000044.1"/>
</dbReference>
<dbReference type="RefSeq" id="YP_027392.1">
    <property type="nucleotide sequence ID" value="NC_005945.1"/>
</dbReference>
<dbReference type="SMR" id="Q81TQ3"/>
<dbReference type="STRING" id="261594.GBAA_1213"/>
<dbReference type="DNASU" id="1088735"/>
<dbReference type="GeneID" id="45021217"/>
<dbReference type="KEGG" id="ban:BA_1213"/>
<dbReference type="KEGG" id="bar:GBAA_1213"/>
<dbReference type="KEGG" id="bat:BAS1120"/>
<dbReference type="PATRIC" id="fig|198094.11.peg.1189"/>
<dbReference type="eggNOG" id="COG0061">
    <property type="taxonomic scope" value="Bacteria"/>
</dbReference>
<dbReference type="HOGENOM" id="CLU_008831_0_3_9"/>
<dbReference type="OMA" id="YRHTHFW"/>
<dbReference type="OrthoDB" id="9774737at2"/>
<dbReference type="Proteomes" id="UP000000427">
    <property type="component" value="Chromosome"/>
</dbReference>
<dbReference type="Proteomes" id="UP000000594">
    <property type="component" value="Chromosome"/>
</dbReference>
<dbReference type="GO" id="GO:0005737">
    <property type="term" value="C:cytoplasm"/>
    <property type="evidence" value="ECO:0007669"/>
    <property type="project" value="UniProtKB-SubCell"/>
</dbReference>
<dbReference type="GO" id="GO:0005524">
    <property type="term" value="F:ATP binding"/>
    <property type="evidence" value="ECO:0007669"/>
    <property type="project" value="UniProtKB-KW"/>
</dbReference>
<dbReference type="GO" id="GO:0046872">
    <property type="term" value="F:metal ion binding"/>
    <property type="evidence" value="ECO:0007669"/>
    <property type="project" value="UniProtKB-UniRule"/>
</dbReference>
<dbReference type="GO" id="GO:0051287">
    <property type="term" value="F:NAD binding"/>
    <property type="evidence" value="ECO:0007669"/>
    <property type="project" value="UniProtKB-ARBA"/>
</dbReference>
<dbReference type="GO" id="GO:0003951">
    <property type="term" value="F:NAD+ kinase activity"/>
    <property type="evidence" value="ECO:0007669"/>
    <property type="project" value="UniProtKB-UniRule"/>
</dbReference>
<dbReference type="GO" id="GO:0019674">
    <property type="term" value="P:NAD metabolic process"/>
    <property type="evidence" value="ECO:0007669"/>
    <property type="project" value="InterPro"/>
</dbReference>
<dbReference type="GO" id="GO:0006741">
    <property type="term" value="P:NADP biosynthetic process"/>
    <property type="evidence" value="ECO:0007669"/>
    <property type="project" value="UniProtKB-UniRule"/>
</dbReference>
<dbReference type="FunFam" id="2.60.200.30:FF:000002">
    <property type="entry name" value="NAD kinase"/>
    <property type="match status" value="1"/>
</dbReference>
<dbReference type="Gene3D" id="3.40.50.10330">
    <property type="entry name" value="Probable inorganic polyphosphate/atp-NAD kinase, domain 1"/>
    <property type="match status" value="1"/>
</dbReference>
<dbReference type="Gene3D" id="2.60.200.30">
    <property type="entry name" value="Probable inorganic polyphosphate/atp-NAD kinase, domain 2"/>
    <property type="match status" value="1"/>
</dbReference>
<dbReference type="HAMAP" id="MF_00361">
    <property type="entry name" value="NAD_kinase"/>
    <property type="match status" value="1"/>
</dbReference>
<dbReference type="InterPro" id="IPR017438">
    <property type="entry name" value="ATP-NAD_kinase_N"/>
</dbReference>
<dbReference type="InterPro" id="IPR017437">
    <property type="entry name" value="ATP-NAD_kinase_PpnK-typ_C"/>
</dbReference>
<dbReference type="InterPro" id="IPR016064">
    <property type="entry name" value="NAD/diacylglycerol_kinase_sf"/>
</dbReference>
<dbReference type="InterPro" id="IPR002504">
    <property type="entry name" value="NADK"/>
</dbReference>
<dbReference type="NCBIfam" id="NF003424">
    <property type="entry name" value="PRK04885.1"/>
    <property type="match status" value="1"/>
</dbReference>
<dbReference type="PANTHER" id="PTHR20275">
    <property type="entry name" value="NAD KINASE"/>
    <property type="match status" value="1"/>
</dbReference>
<dbReference type="PANTHER" id="PTHR20275:SF0">
    <property type="entry name" value="NAD KINASE"/>
    <property type="match status" value="1"/>
</dbReference>
<dbReference type="Pfam" id="PF01513">
    <property type="entry name" value="NAD_kinase"/>
    <property type="match status" value="1"/>
</dbReference>
<dbReference type="Pfam" id="PF20143">
    <property type="entry name" value="NAD_kinase_C"/>
    <property type="match status" value="1"/>
</dbReference>
<dbReference type="SUPFAM" id="SSF111331">
    <property type="entry name" value="NAD kinase/diacylglycerol kinase-like"/>
    <property type="match status" value="1"/>
</dbReference>
<protein>
    <recommendedName>
        <fullName evidence="1">NAD kinase 1</fullName>
        <ecNumber evidence="1">2.7.1.23</ecNumber>
    </recommendedName>
    <alternativeName>
        <fullName evidence="1">ATP-dependent NAD kinase 1</fullName>
    </alternativeName>
</protein>